<dbReference type="EMBL" id="AC012394">
    <property type="protein sequence ID" value="AAF16656.1"/>
    <property type="status" value="ALT_SEQ"/>
    <property type="molecule type" value="Genomic_DNA"/>
</dbReference>
<dbReference type="EMBL" id="AC015450">
    <property type="protein sequence ID" value="AAG51945.1"/>
    <property type="status" value="ALT_SEQ"/>
    <property type="molecule type" value="Genomic_DNA"/>
</dbReference>
<dbReference type="EMBL" id="CP002684">
    <property type="protein sequence ID" value="AEE35844.1"/>
    <property type="molecule type" value="Genomic_DNA"/>
</dbReference>
<dbReference type="EMBL" id="BT009723">
    <property type="protein sequence ID" value="AAP88357.1"/>
    <property type="molecule type" value="mRNA"/>
</dbReference>
<dbReference type="EMBL" id="AY084993">
    <property type="protein sequence ID" value="AAM61552.1"/>
    <property type="molecule type" value="mRNA"/>
</dbReference>
<dbReference type="EMBL" id="AK227301">
    <property type="protein sequence ID" value="BAE99317.1"/>
    <property type="molecule type" value="mRNA"/>
</dbReference>
<dbReference type="RefSeq" id="NP_565131.1">
    <property type="nucleotide sequence ID" value="NM_106295.3"/>
</dbReference>
<dbReference type="SMR" id="Q9S720"/>
<dbReference type="BioGRID" id="29197">
    <property type="interactions" value="1"/>
</dbReference>
<dbReference type="FunCoup" id="Q9S720">
    <property type="interactions" value="1420"/>
</dbReference>
<dbReference type="STRING" id="3702.Q9S720"/>
<dbReference type="PaxDb" id="3702-AT1G76450.1"/>
<dbReference type="ProteomicsDB" id="249039"/>
<dbReference type="EnsemblPlants" id="AT1G76450.1">
    <property type="protein sequence ID" value="AT1G76450.1"/>
    <property type="gene ID" value="AT1G76450"/>
</dbReference>
<dbReference type="GeneID" id="843978"/>
<dbReference type="Gramene" id="AT1G76450.1">
    <property type="protein sequence ID" value="AT1G76450.1"/>
    <property type="gene ID" value="AT1G76450"/>
</dbReference>
<dbReference type="KEGG" id="ath:AT1G76450"/>
<dbReference type="Araport" id="AT1G76450"/>
<dbReference type="TAIR" id="AT1G76450"/>
<dbReference type="eggNOG" id="ENOG502QT1A">
    <property type="taxonomic scope" value="Eukaryota"/>
</dbReference>
<dbReference type="HOGENOM" id="CLU_085883_1_0_1"/>
<dbReference type="InParanoid" id="Q9S720"/>
<dbReference type="OMA" id="ILIPQDW"/>
<dbReference type="OrthoDB" id="2013293at2759"/>
<dbReference type="PhylomeDB" id="Q9S720"/>
<dbReference type="BioCyc" id="MetaCyc:AT1G76450-MONOMER"/>
<dbReference type="PRO" id="PR:Q9S720"/>
<dbReference type="Proteomes" id="UP000006548">
    <property type="component" value="Chromosome 1"/>
</dbReference>
<dbReference type="ExpressionAtlas" id="Q9S720">
    <property type="expression patterns" value="baseline and differential"/>
</dbReference>
<dbReference type="GO" id="GO:0009507">
    <property type="term" value="C:chloroplast"/>
    <property type="evidence" value="ECO:0007005"/>
    <property type="project" value="TAIR"/>
</dbReference>
<dbReference type="GO" id="GO:0009543">
    <property type="term" value="C:chloroplast thylakoid lumen"/>
    <property type="evidence" value="ECO:0007669"/>
    <property type="project" value="UniProtKB-SubCell"/>
</dbReference>
<dbReference type="GO" id="GO:0009535">
    <property type="term" value="C:chloroplast thylakoid membrane"/>
    <property type="evidence" value="ECO:0007005"/>
    <property type="project" value="TAIR"/>
</dbReference>
<dbReference type="GO" id="GO:0019898">
    <property type="term" value="C:extrinsic component of membrane"/>
    <property type="evidence" value="ECO:0007669"/>
    <property type="project" value="InterPro"/>
</dbReference>
<dbReference type="GO" id="GO:0005739">
    <property type="term" value="C:mitochondrion"/>
    <property type="evidence" value="ECO:0007005"/>
    <property type="project" value="TAIR"/>
</dbReference>
<dbReference type="GO" id="GO:0009654">
    <property type="term" value="C:photosystem II oxygen evolving complex"/>
    <property type="evidence" value="ECO:0007669"/>
    <property type="project" value="InterPro"/>
</dbReference>
<dbReference type="GO" id="GO:0009579">
    <property type="term" value="C:thylakoid"/>
    <property type="evidence" value="ECO:0007005"/>
    <property type="project" value="TAIR"/>
</dbReference>
<dbReference type="GO" id="GO:0031977">
    <property type="term" value="C:thylakoid lumen"/>
    <property type="evidence" value="ECO:0007005"/>
    <property type="project" value="TAIR"/>
</dbReference>
<dbReference type="GO" id="GO:0005509">
    <property type="term" value="F:calcium ion binding"/>
    <property type="evidence" value="ECO:0007669"/>
    <property type="project" value="InterPro"/>
</dbReference>
<dbReference type="GO" id="GO:0015979">
    <property type="term" value="P:photosynthesis"/>
    <property type="evidence" value="ECO:0007669"/>
    <property type="project" value="InterPro"/>
</dbReference>
<dbReference type="FunFam" id="3.40.1000.10:FF:000016">
    <property type="entry name" value="PsbP domain-containing protein 3, chloroplastic"/>
    <property type="match status" value="1"/>
</dbReference>
<dbReference type="Gene3D" id="3.40.1000.10">
    <property type="entry name" value="Mog1/PsbP, alpha/beta/alpha sandwich"/>
    <property type="match status" value="1"/>
</dbReference>
<dbReference type="InterPro" id="IPR016123">
    <property type="entry name" value="Mog1/PsbP_a/b/a-sand"/>
</dbReference>
<dbReference type="InterPro" id="IPR002683">
    <property type="entry name" value="PsbP_C"/>
</dbReference>
<dbReference type="PANTHER" id="PTHR31407">
    <property type="match status" value="1"/>
</dbReference>
<dbReference type="PANTHER" id="PTHR31407:SF17">
    <property type="entry name" value="PSBP DOMAIN-CONTAINING PROTEIN 3, CHLOROPLASTIC"/>
    <property type="match status" value="1"/>
</dbReference>
<dbReference type="Pfam" id="PF01789">
    <property type="entry name" value="PsbP"/>
    <property type="match status" value="1"/>
</dbReference>
<dbReference type="SUPFAM" id="SSF55724">
    <property type="entry name" value="Mog1p/PsbP-like"/>
    <property type="match status" value="1"/>
</dbReference>
<reference key="1">
    <citation type="journal article" date="2000" name="Nature">
        <title>Sequence and analysis of chromosome 1 of the plant Arabidopsis thaliana.</title>
        <authorList>
            <person name="Theologis A."/>
            <person name="Ecker J.R."/>
            <person name="Palm C.J."/>
            <person name="Federspiel N.A."/>
            <person name="Kaul S."/>
            <person name="White O."/>
            <person name="Alonso J."/>
            <person name="Altafi H."/>
            <person name="Araujo R."/>
            <person name="Bowman C.L."/>
            <person name="Brooks S.Y."/>
            <person name="Buehler E."/>
            <person name="Chan A."/>
            <person name="Chao Q."/>
            <person name="Chen H."/>
            <person name="Cheuk R.F."/>
            <person name="Chin C.W."/>
            <person name="Chung M.K."/>
            <person name="Conn L."/>
            <person name="Conway A.B."/>
            <person name="Conway A.R."/>
            <person name="Creasy T.H."/>
            <person name="Dewar K."/>
            <person name="Dunn P."/>
            <person name="Etgu P."/>
            <person name="Feldblyum T.V."/>
            <person name="Feng J.-D."/>
            <person name="Fong B."/>
            <person name="Fujii C.Y."/>
            <person name="Gill J.E."/>
            <person name="Goldsmith A.D."/>
            <person name="Haas B."/>
            <person name="Hansen N.F."/>
            <person name="Hughes B."/>
            <person name="Huizar L."/>
            <person name="Hunter J.L."/>
            <person name="Jenkins J."/>
            <person name="Johnson-Hopson C."/>
            <person name="Khan S."/>
            <person name="Khaykin E."/>
            <person name="Kim C.J."/>
            <person name="Koo H.L."/>
            <person name="Kremenetskaia I."/>
            <person name="Kurtz D.B."/>
            <person name="Kwan A."/>
            <person name="Lam B."/>
            <person name="Langin-Hooper S."/>
            <person name="Lee A."/>
            <person name="Lee J.M."/>
            <person name="Lenz C.A."/>
            <person name="Li J.H."/>
            <person name="Li Y.-P."/>
            <person name="Lin X."/>
            <person name="Liu S.X."/>
            <person name="Liu Z.A."/>
            <person name="Luros J.S."/>
            <person name="Maiti R."/>
            <person name="Marziali A."/>
            <person name="Militscher J."/>
            <person name="Miranda M."/>
            <person name="Nguyen M."/>
            <person name="Nierman W.C."/>
            <person name="Osborne B.I."/>
            <person name="Pai G."/>
            <person name="Peterson J."/>
            <person name="Pham P.K."/>
            <person name="Rizzo M."/>
            <person name="Rooney T."/>
            <person name="Rowley D."/>
            <person name="Sakano H."/>
            <person name="Salzberg S.L."/>
            <person name="Schwartz J.R."/>
            <person name="Shinn P."/>
            <person name="Southwick A.M."/>
            <person name="Sun H."/>
            <person name="Tallon L.J."/>
            <person name="Tambunga G."/>
            <person name="Toriumi M.J."/>
            <person name="Town C.D."/>
            <person name="Utterback T."/>
            <person name="Van Aken S."/>
            <person name="Vaysberg M."/>
            <person name="Vysotskaia V.S."/>
            <person name="Walker M."/>
            <person name="Wu D."/>
            <person name="Yu G."/>
            <person name="Fraser C.M."/>
            <person name="Venter J.C."/>
            <person name="Davis R.W."/>
        </authorList>
    </citation>
    <scope>NUCLEOTIDE SEQUENCE [LARGE SCALE GENOMIC DNA]</scope>
    <source>
        <strain>cv. Columbia</strain>
    </source>
</reference>
<reference key="2">
    <citation type="journal article" date="2017" name="Plant J.">
        <title>Araport11: a complete reannotation of the Arabidopsis thaliana reference genome.</title>
        <authorList>
            <person name="Cheng C.Y."/>
            <person name="Krishnakumar V."/>
            <person name="Chan A.P."/>
            <person name="Thibaud-Nissen F."/>
            <person name="Schobel S."/>
            <person name="Town C.D."/>
        </authorList>
    </citation>
    <scope>GENOME REANNOTATION</scope>
    <source>
        <strain>cv. Columbia</strain>
    </source>
</reference>
<reference key="3">
    <citation type="journal article" date="2003" name="Science">
        <title>Empirical analysis of transcriptional activity in the Arabidopsis genome.</title>
        <authorList>
            <person name="Yamada K."/>
            <person name="Lim J."/>
            <person name="Dale J.M."/>
            <person name="Chen H."/>
            <person name="Shinn P."/>
            <person name="Palm C.J."/>
            <person name="Southwick A.M."/>
            <person name="Wu H.C."/>
            <person name="Kim C.J."/>
            <person name="Nguyen M."/>
            <person name="Pham P.K."/>
            <person name="Cheuk R.F."/>
            <person name="Karlin-Newmann G."/>
            <person name="Liu S.X."/>
            <person name="Lam B."/>
            <person name="Sakano H."/>
            <person name="Wu T."/>
            <person name="Yu G."/>
            <person name="Miranda M."/>
            <person name="Quach H.L."/>
            <person name="Tripp M."/>
            <person name="Chang C.H."/>
            <person name="Lee J.M."/>
            <person name="Toriumi M.J."/>
            <person name="Chan M.M."/>
            <person name="Tang C.C."/>
            <person name="Onodera C.S."/>
            <person name="Deng J.M."/>
            <person name="Akiyama K."/>
            <person name="Ansari Y."/>
            <person name="Arakawa T."/>
            <person name="Banh J."/>
            <person name="Banno F."/>
            <person name="Bowser L."/>
            <person name="Brooks S.Y."/>
            <person name="Carninci P."/>
            <person name="Chao Q."/>
            <person name="Choy N."/>
            <person name="Enju A."/>
            <person name="Goldsmith A.D."/>
            <person name="Gurjal M."/>
            <person name="Hansen N.F."/>
            <person name="Hayashizaki Y."/>
            <person name="Johnson-Hopson C."/>
            <person name="Hsuan V.W."/>
            <person name="Iida K."/>
            <person name="Karnes M."/>
            <person name="Khan S."/>
            <person name="Koesema E."/>
            <person name="Ishida J."/>
            <person name="Jiang P.X."/>
            <person name="Jones T."/>
            <person name="Kawai J."/>
            <person name="Kamiya A."/>
            <person name="Meyers C."/>
            <person name="Nakajima M."/>
            <person name="Narusaka M."/>
            <person name="Seki M."/>
            <person name="Sakurai T."/>
            <person name="Satou M."/>
            <person name="Tamse R."/>
            <person name="Vaysberg M."/>
            <person name="Wallender E.K."/>
            <person name="Wong C."/>
            <person name="Yamamura Y."/>
            <person name="Yuan S."/>
            <person name="Shinozaki K."/>
            <person name="Davis R.W."/>
            <person name="Theologis A."/>
            <person name="Ecker J.R."/>
        </authorList>
    </citation>
    <scope>NUCLEOTIDE SEQUENCE [LARGE SCALE MRNA]</scope>
    <source>
        <strain>cv. Columbia</strain>
    </source>
</reference>
<reference key="4">
    <citation type="submission" date="2002-03" db="EMBL/GenBank/DDBJ databases">
        <title>Full-length cDNA from Arabidopsis thaliana.</title>
        <authorList>
            <person name="Brover V.V."/>
            <person name="Troukhan M.E."/>
            <person name="Alexandrov N.A."/>
            <person name="Lu Y.-P."/>
            <person name="Flavell R.B."/>
            <person name="Feldmann K.A."/>
        </authorList>
    </citation>
    <scope>NUCLEOTIDE SEQUENCE [LARGE SCALE MRNA]</scope>
</reference>
<reference key="5">
    <citation type="submission" date="2006-07" db="EMBL/GenBank/DDBJ databases">
        <title>Large-scale analysis of RIKEN Arabidopsis full-length (RAFL) cDNAs.</title>
        <authorList>
            <person name="Totoki Y."/>
            <person name="Seki M."/>
            <person name="Ishida J."/>
            <person name="Nakajima M."/>
            <person name="Enju A."/>
            <person name="Kamiya A."/>
            <person name="Narusaka M."/>
            <person name="Shin-i T."/>
            <person name="Nakagawa M."/>
            <person name="Sakamoto N."/>
            <person name="Oishi K."/>
            <person name="Kohara Y."/>
            <person name="Kobayashi M."/>
            <person name="Toyoda A."/>
            <person name="Sakaki Y."/>
            <person name="Sakurai T."/>
            <person name="Iida K."/>
            <person name="Akiyama K."/>
            <person name="Satou M."/>
            <person name="Toyoda T."/>
            <person name="Konagaya A."/>
            <person name="Carninci P."/>
            <person name="Kawai J."/>
            <person name="Hayashizaki Y."/>
            <person name="Shinozaki K."/>
        </authorList>
    </citation>
    <scope>NUCLEOTIDE SEQUENCE [LARGE SCALE MRNA]</scope>
    <source>
        <strain>cv. Columbia</strain>
    </source>
</reference>
<reference key="6">
    <citation type="journal article" date="2002" name="J. Biol. Chem.">
        <title>Proteome map of the chloroplast lumen of Arabidopsis thaliana.</title>
        <authorList>
            <person name="Schubert M."/>
            <person name="Petersson U.A."/>
            <person name="Haas B.J."/>
            <person name="Funk C."/>
            <person name="Schroeder W.P."/>
            <person name="Kieselbach T."/>
        </authorList>
    </citation>
    <scope>PROTEIN SEQUENCE OF 81-104</scope>
    <scope>SUBCELLULAR LOCATION</scope>
</reference>
<reference key="7">
    <citation type="journal article" date="2005" name="J. Biol. Chem.">
        <title>Retrograde plastid redox signals in the expression of nuclear genes for chloroplast proteins of Arabidopsis thaliana.</title>
        <authorList>
            <person name="Fey V."/>
            <person name="Wagner R."/>
            <person name="Brauetigam K."/>
            <person name="Wirtz M."/>
            <person name="Hell R."/>
            <person name="Dietzmann A."/>
            <person name="Leister D."/>
            <person name="Oelmueller R."/>
            <person name="Pfannschmidt T."/>
        </authorList>
    </citation>
    <scope>INDUCTION BY REDOX SIGNALS [LARGE SCALE ANALYSIS]</scope>
</reference>
<reference key="8">
    <citation type="journal article" date="2007" name="Plant Physiol.">
        <title>Distinct functions for the two PsbP-like proteins PPL1 and PPL2 in the chloroplast thylakoid lumen of Arabidopsis.</title>
        <authorList>
            <person name="Ishihara S."/>
            <person name="Takabayashi A."/>
            <person name="Ido K."/>
            <person name="Endo T."/>
            <person name="Ifuku K."/>
            <person name="Sato F."/>
        </authorList>
    </citation>
    <scope>GENE FAMILY</scope>
    <scope>NOMENCLATURE</scope>
</reference>
<reference key="9">
    <citation type="journal article" date="2008" name="PLoS ONE">
        <title>Sorting signals, N-terminal modifications and abundance of the chloroplast proteome.</title>
        <authorList>
            <person name="Zybailov B."/>
            <person name="Rutschow H."/>
            <person name="Friso G."/>
            <person name="Rudella A."/>
            <person name="Emanuelsson O."/>
            <person name="Sun Q."/>
            <person name="van Wijk K.J."/>
        </authorList>
    </citation>
    <scope>IDENTIFICATION BY MASS SPECTROMETRY</scope>
    <scope>SUBCELLULAR LOCATION [LARGE SCALE ANALYSIS]</scope>
</reference>
<comment type="subcellular location">
    <subcellularLocation>
        <location evidence="2 4">Plastid</location>
        <location evidence="2 4">Chloroplast thylakoid lumen</location>
    </subcellularLocation>
</comment>
<comment type="induction">
    <text evidence="3">Down-regulated by photosynthetic redox signals.</text>
</comment>
<comment type="similarity">
    <text evidence="5">Belongs to the PsbP family.</text>
</comment>
<comment type="sequence caution" evidence="5">
    <conflict type="erroneous gene model prediction">
        <sequence resource="EMBL-CDS" id="AAF16656"/>
    </conflict>
</comment>
<comment type="sequence caution" evidence="5">
    <conflict type="erroneous gene model prediction">
        <sequence resource="EMBL-CDS" id="AAG51945"/>
    </conflict>
</comment>
<gene>
    <name type="primary">PPD3</name>
    <name type="ordered locus">At1g76450</name>
    <name type="ORF">F14G6.5</name>
    <name type="ORF">F15M4.5</name>
</gene>
<proteinExistence type="evidence at protein level"/>
<sequence>MAAISPWLSSPQSFSNPRVTITDSRRCSSISAAISVLDSSNEEQHRISSRDHVGMKRRDVMLQIASSVFFLPLAISPAFAETNASEAFRVYTDETNKFEISIPQDWQVGQAEPNGFKSITAFYPQETSTSNVSIAITGLGPDFTRMESFGKVEAFAETLVSGLDRSWQKPVGVTAKLIDSRASKGFYYIEYTLQNPGEARKHLYSAIGMATNGWYNRLYTVTGQFTDEESAEQSSKIQKTVKSFRFI</sequence>
<evidence type="ECO:0000255" key="1"/>
<evidence type="ECO:0000269" key="2">
    <source>
    </source>
</evidence>
<evidence type="ECO:0000269" key="3">
    <source>
    </source>
</evidence>
<evidence type="ECO:0000269" key="4">
    <source>
    </source>
</evidence>
<evidence type="ECO:0000305" key="5"/>
<protein>
    <recommendedName>
        <fullName>PsbP domain-containing protein 3, chloroplastic</fullName>
    </recommendedName>
    <alternativeName>
        <fullName>OEC23-like protein 2</fullName>
    </alternativeName>
</protein>
<feature type="transit peptide" description="Chloroplast" evidence="1">
    <location>
        <begin position="1"/>
        <end position="26"/>
    </location>
</feature>
<feature type="transit peptide" description="Thylakoid" evidence="2">
    <location>
        <begin position="27"/>
        <end position="80"/>
    </location>
</feature>
<feature type="chain" id="PRO_0000022492" description="PsbP domain-containing protein 3, chloroplastic">
    <location>
        <begin position="81"/>
        <end position="247"/>
    </location>
</feature>
<feature type="sequence conflict" description="In Ref. 4; AAM61552." evidence="5" ref="4">
    <original>A</original>
    <variation>S</variation>
    <location>
        <position position="231"/>
    </location>
</feature>
<name>PPD3_ARATH</name>
<keyword id="KW-0150">Chloroplast</keyword>
<keyword id="KW-0903">Direct protein sequencing</keyword>
<keyword id="KW-0934">Plastid</keyword>
<keyword id="KW-1185">Reference proteome</keyword>
<keyword id="KW-0793">Thylakoid</keyword>
<keyword id="KW-0809">Transit peptide</keyword>
<organism>
    <name type="scientific">Arabidopsis thaliana</name>
    <name type="common">Mouse-ear cress</name>
    <dbReference type="NCBI Taxonomy" id="3702"/>
    <lineage>
        <taxon>Eukaryota</taxon>
        <taxon>Viridiplantae</taxon>
        <taxon>Streptophyta</taxon>
        <taxon>Embryophyta</taxon>
        <taxon>Tracheophyta</taxon>
        <taxon>Spermatophyta</taxon>
        <taxon>Magnoliopsida</taxon>
        <taxon>eudicotyledons</taxon>
        <taxon>Gunneridae</taxon>
        <taxon>Pentapetalae</taxon>
        <taxon>rosids</taxon>
        <taxon>malvids</taxon>
        <taxon>Brassicales</taxon>
        <taxon>Brassicaceae</taxon>
        <taxon>Camelineae</taxon>
        <taxon>Arabidopsis</taxon>
    </lineage>
</organism>
<accession>Q9S720</accession>
<accession>Q0WU81</accession>
<accession>Q8LF82</accession>